<gene>
    <name evidence="1" type="primary">ilvC</name>
    <name type="ordered locus">VS_0061</name>
</gene>
<sequence>MANYFNTLNLREQLDQLGRCRFMDREEFTTEAEYLEGKKIVIVGCGAQGLNQGLNMRDSGLDVSYALRQAAIDEKRQSFKNADENGFVVGSYETLIPQADLVINLTPDKQHTNVVETVMPLMKEGAALGYSHGFNVVEEGMQLRADLTVVMVAPKCPGSEVREEYKRGFGVPTLIAVHPENDPKGEGWDIAKAWAAGTGGHRAGCLESSFVAEVKSDLMGEQTILCGMLQAGSIVSYEKMIADGIEPGYAGKLLQYGWETITEALKFGGVTHMMDRLSNPAKVKAFELSEELKDLMRPLYNKHMDDIISGHFSSTMMADWANDDVNLLGWREETGETAFENYPASDVEISEQEYFDNGILMVAMVRAGVELAFEAMTASGIIDESAYYESLHELPLIANTVARKRLYEMNVVISDTAEYGNYLFANVATPLLREKFMPSVATDVIGRGLGGTSNQVDNAKLIEVNEAIRNHPVEYIGEELRSYMSDMKRIAVGG</sequence>
<feature type="chain" id="PRO_1000191016" description="Ketol-acid reductoisomerase (NADP(+))">
    <location>
        <begin position="1"/>
        <end position="494"/>
    </location>
</feature>
<feature type="domain" description="KARI N-terminal Rossmann" evidence="2">
    <location>
        <begin position="14"/>
        <end position="208"/>
    </location>
</feature>
<feature type="domain" description="KARI C-terminal knotted 1" evidence="3">
    <location>
        <begin position="209"/>
        <end position="344"/>
    </location>
</feature>
<feature type="domain" description="KARI C-terminal knotted 2" evidence="3">
    <location>
        <begin position="345"/>
        <end position="487"/>
    </location>
</feature>
<feature type="active site" evidence="1">
    <location>
        <position position="132"/>
    </location>
</feature>
<feature type="binding site" evidence="1">
    <location>
        <begin position="45"/>
        <end position="48"/>
    </location>
    <ligand>
        <name>NADP(+)</name>
        <dbReference type="ChEBI" id="CHEBI:58349"/>
    </ligand>
</feature>
<feature type="binding site" evidence="1">
    <location>
        <position position="68"/>
    </location>
    <ligand>
        <name>NADP(+)</name>
        <dbReference type="ChEBI" id="CHEBI:58349"/>
    </ligand>
</feature>
<feature type="binding site" evidence="1">
    <location>
        <position position="76"/>
    </location>
    <ligand>
        <name>NADP(+)</name>
        <dbReference type="ChEBI" id="CHEBI:58349"/>
    </ligand>
</feature>
<feature type="binding site" evidence="1">
    <location>
        <position position="78"/>
    </location>
    <ligand>
        <name>NADP(+)</name>
        <dbReference type="ChEBI" id="CHEBI:58349"/>
    </ligand>
</feature>
<feature type="binding site" evidence="1">
    <location>
        <begin position="108"/>
        <end position="110"/>
    </location>
    <ligand>
        <name>NADP(+)</name>
        <dbReference type="ChEBI" id="CHEBI:58349"/>
    </ligand>
</feature>
<feature type="binding site" evidence="1">
    <location>
        <position position="158"/>
    </location>
    <ligand>
        <name>NADP(+)</name>
        <dbReference type="ChEBI" id="CHEBI:58349"/>
    </ligand>
</feature>
<feature type="binding site" evidence="1">
    <location>
        <position position="217"/>
    </location>
    <ligand>
        <name>Mg(2+)</name>
        <dbReference type="ChEBI" id="CHEBI:18420"/>
        <label>1</label>
    </ligand>
</feature>
<feature type="binding site" evidence="1">
    <location>
        <position position="217"/>
    </location>
    <ligand>
        <name>Mg(2+)</name>
        <dbReference type="ChEBI" id="CHEBI:18420"/>
        <label>2</label>
    </ligand>
</feature>
<feature type="binding site" evidence="1">
    <location>
        <position position="221"/>
    </location>
    <ligand>
        <name>Mg(2+)</name>
        <dbReference type="ChEBI" id="CHEBI:18420"/>
        <label>1</label>
    </ligand>
</feature>
<feature type="binding site" evidence="1">
    <location>
        <position position="389"/>
    </location>
    <ligand>
        <name>Mg(2+)</name>
        <dbReference type="ChEBI" id="CHEBI:18420"/>
        <label>2</label>
    </ligand>
</feature>
<feature type="binding site" evidence="1">
    <location>
        <position position="393"/>
    </location>
    <ligand>
        <name>Mg(2+)</name>
        <dbReference type="ChEBI" id="CHEBI:18420"/>
        <label>2</label>
    </ligand>
</feature>
<feature type="binding site" evidence="1">
    <location>
        <position position="414"/>
    </location>
    <ligand>
        <name>substrate</name>
    </ligand>
</feature>
<comment type="function">
    <text evidence="1">Involved in the biosynthesis of branched-chain amino acids (BCAA). Catalyzes an alkyl-migration followed by a ketol-acid reduction of (S)-2-acetolactate (S2AL) to yield (R)-2,3-dihydroxy-isovalerate. In the isomerase reaction, S2AL is rearranged via a Mg-dependent methyl migration to produce 3-hydroxy-3-methyl-2-ketobutyrate (HMKB). In the reductase reaction, this 2-ketoacid undergoes a metal-dependent reduction by NADPH to yield (R)-2,3-dihydroxy-isovalerate.</text>
</comment>
<comment type="catalytic activity">
    <reaction evidence="1">
        <text>(2R)-2,3-dihydroxy-3-methylbutanoate + NADP(+) = (2S)-2-acetolactate + NADPH + H(+)</text>
        <dbReference type="Rhea" id="RHEA:22068"/>
        <dbReference type="ChEBI" id="CHEBI:15378"/>
        <dbReference type="ChEBI" id="CHEBI:49072"/>
        <dbReference type="ChEBI" id="CHEBI:57783"/>
        <dbReference type="ChEBI" id="CHEBI:58349"/>
        <dbReference type="ChEBI" id="CHEBI:58476"/>
        <dbReference type="EC" id="1.1.1.86"/>
    </reaction>
</comment>
<comment type="catalytic activity">
    <reaction evidence="1">
        <text>(2R,3R)-2,3-dihydroxy-3-methylpentanoate + NADP(+) = (S)-2-ethyl-2-hydroxy-3-oxobutanoate + NADPH + H(+)</text>
        <dbReference type="Rhea" id="RHEA:13493"/>
        <dbReference type="ChEBI" id="CHEBI:15378"/>
        <dbReference type="ChEBI" id="CHEBI:49256"/>
        <dbReference type="ChEBI" id="CHEBI:49258"/>
        <dbReference type="ChEBI" id="CHEBI:57783"/>
        <dbReference type="ChEBI" id="CHEBI:58349"/>
        <dbReference type="EC" id="1.1.1.86"/>
    </reaction>
</comment>
<comment type="cofactor">
    <cofactor evidence="1">
        <name>Mg(2+)</name>
        <dbReference type="ChEBI" id="CHEBI:18420"/>
    </cofactor>
    <text evidence="1">Binds 2 magnesium ions per subunit.</text>
</comment>
<comment type="pathway">
    <text evidence="1">Amino-acid biosynthesis; L-isoleucine biosynthesis; L-isoleucine from 2-oxobutanoate: step 2/4.</text>
</comment>
<comment type="pathway">
    <text evidence="1">Amino-acid biosynthesis; L-valine biosynthesis; L-valine from pyruvate: step 2/4.</text>
</comment>
<comment type="similarity">
    <text evidence="1">Belongs to the ketol-acid reductoisomerase family.</text>
</comment>
<dbReference type="EC" id="1.1.1.86" evidence="1"/>
<dbReference type="EMBL" id="FM954972">
    <property type="protein sequence ID" value="CAV17102.1"/>
    <property type="molecule type" value="Genomic_DNA"/>
</dbReference>
<dbReference type="SMR" id="B7VGL9"/>
<dbReference type="STRING" id="575788.VS_0061"/>
<dbReference type="KEGG" id="vsp:VS_0061"/>
<dbReference type="PATRIC" id="fig|575788.5.peg.1460"/>
<dbReference type="eggNOG" id="COG0059">
    <property type="taxonomic scope" value="Bacteria"/>
</dbReference>
<dbReference type="HOGENOM" id="CLU_551905_0_0_6"/>
<dbReference type="UniPathway" id="UPA00047">
    <property type="reaction ID" value="UER00056"/>
</dbReference>
<dbReference type="UniPathway" id="UPA00049">
    <property type="reaction ID" value="UER00060"/>
</dbReference>
<dbReference type="Proteomes" id="UP000009100">
    <property type="component" value="Chromosome 1"/>
</dbReference>
<dbReference type="GO" id="GO:0005829">
    <property type="term" value="C:cytosol"/>
    <property type="evidence" value="ECO:0007669"/>
    <property type="project" value="TreeGrafter"/>
</dbReference>
<dbReference type="GO" id="GO:0004455">
    <property type="term" value="F:ketol-acid reductoisomerase activity"/>
    <property type="evidence" value="ECO:0007669"/>
    <property type="project" value="UniProtKB-UniRule"/>
</dbReference>
<dbReference type="GO" id="GO:0000287">
    <property type="term" value="F:magnesium ion binding"/>
    <property type="evidence" value="ECO:0007669"/>
    <property type="project" value="UniProtKB-UniRule"/>
</dbReference>
<dbReference type="GO" id="GO:0009097">
    <property type="term" value="P:isoleucine biosynthetic process"/>
    <property type="evidence" value="ECO:0007669"/>
    <property type="project" value="UniProtKB-UniRule"/>
</dbReference>
<dbReference type="GO" id="GO:0009099">
    <property type="term" value="P:L-valine biosynthetic process"/>
    <property type="evidence" value="ECO:0007669"/>
    <property type="project" value="UniProtKB-UniRule"/>
</dbReference>
<dbReference type="FunFam" id="1.10.1040.10:FF:000007">
    <property type="entry name" value="Ketol-acid reductoisomerase (NADP(+))"/>
    <property type="match status" value="1"/>
</dbReference>
<dbReference type="FunFam" id="3.40.50.720:FF:000043">
    <property type="entry name" value="Ketol-acid reductoisomerase (NADP(+))"/>
    <property type="match status" value="1"/>
</dbReference>
<dbReference type="Gene3D" id="1.10.1040.10">
    <property type="entry name" value="N-(1-d-carboxylethyl)-l-norvaline Dehydrogenase, domain 2"/>
    <property type="match status" value="1"/>
</dbReference>
<dbReference type="Gene3D" id="3.40.50.720">
    <property type="entry name" value="NAD(P)-binding Rossmann-like Domain"/>
    <property type="match status" value="1"/>
</dbReference>
<dbReference type="HAMAP" id="MF_00435">
    <property type="entry name" value="IlvC"/>
    <property type="match status" value="1"/>
</dbReference>
<dbReference type="InterPro" id="IPR008927">
    <property type="entry name" value="6-PGluconate_DH-like_C_sf"/>
</dbReference>
<dbReference type="InterPro" id="IPR013328">
    <property type="entry name" value="6PGD_dom2"/>
</dbReference>
<dbReference type="InterPro" id="IPR013023">
    <property type="entry name" value="KARI"/>
</dbReference>
<dbReference type="InterPro" id="IPR000506">
    <property type="entry name" value="KARI_C"/>
</dbReference>
<dbReference type="InterPro" id="IPR013116">
    <property type="entry name" value="KARI_N"/>
</dbReference>
<dbReference type="InterPro" id="IPR036291">
    <property type="entry name" value="NAD(P)-bd_dom_sf"/>
</dbReference>
<dbReference type="NCBIfam" id="TIGR00465">
    <property type="entry name" value="ilvC"/>
    <property type="match status" value="1"/>
</dbReference>
<dbReference type="NCBIfam" id="NF003557">
    <property type="entry name" value="PRK05225.1"/>
    <property type="match status" value="1"/>
</dbReference>
<dbReference type="PANTHER" id="PTHR21371">
    <property type="entry name" value="KETOL-ACID REDUCTOISOMERASE, MITOCHONDRIAL"/>
    <property type="match status" value="1"/>
</dbReference>
<dbReference type="PANTHER" id="PTHR21371:SF1">
    <property type="entry name" value="KETOL-ACID REDUCTOISOMERASE, MITOCHONDRIAL"/>
    <property type="match status" value="1"/>
</dbReference>
<dbReference type="Pfam" id="PF01450">
    <property type="entry name" value="KARI_C"/>
    <property type="match status" value="2"/>
</dbReference>
<dbReference type="Pfam" id="PF07991">
    <property type="entry name" value="KARI_N"/>
    <property type="match status" value="1"/>
</dbReference>
<dbReference type="SUPFAM" id="SSF48179">
    <property type="entry name" value="6-phosphogluconate dehydrogenase C-terminal domain-like"/>
    <property type="match status" value="2"/>
</dbReference>
<dbReference type="SUPFAM" id="SSF51735">
    <property type="entry name" value="NAD(P)-binding Rossmann-fold domains"/>
    <property type="match status" value="1"/>
</dbReference>
<dbReference type="PROSITE" id="PS51851">
    <property type="entry name" value="KARI_C"/>
    <property type="match status" value="2"/>
</dbReference>
<dbReference type="PROSITE" id="PS51850">
    <property type="entry name" value="KARI_N"/>
    <property type="match status" value="1"/>
</dbReference>
<organism>
    <name type="scientific">Vibrio atlanticus (strain LGP32)</name>
    <name type="common">Vibrio splendidus (strain Mel32)</name>
    <dbReference type="NCBI Taxonomy" id="575788"/>
    <lineage>
        <taxon>Bacteria</taxon>
        <taxon>Pseudomonadati</taxon>
        <taxon>Pseudomonadota</taxon>
        <taxon>Gammaproteobacteria</taxon>
        <taxon>Vibrionales</taxon>
        <taxon>Vibrionaceae</taxon>
        <taxon>Vibrio</taxon>
    </lineage>
</organism>
<protein>
    <recommendedName>
        <fullName evidence="1">Ketol-acid reductoisomerase (NADP(+))</fullName>
        <shortName evidence="1">KARI</shortName>
        <ecNumber evidence="1">1.1.1.86</ecNumber>
    </recommendedName>
    <alternativeName>
        <fullName evidence="1">Acetohydroxy-acid isomeroreductase</fullName>
        <shortName evidence="1">AHIR</shortName>
    </alternativeName>
    <alternativeName>
        <fullName evidence="1">Alpha-keto-beta-hydroxylacyl reductoisomerase</fullName>
    </alternativeName>
    <alternativeName>
        <fullName evidence="1">Ketol-acid reductoisomerase type 2</fullName>
    </alternativeName>
    <alternativeName>
        <fullName evidence="1">Ketol-acid reductoisomerase type II</fullName>
    </alternativeName>
</protein>
<proteinExistence type="inferred from homology"/>
<reference key="1">
    <citation type="submission" date="2009-02" db="EMBL/GenBank/DDBJ databases">
        <title>Vibrio splendidus str. LGP32 complete genome.</title>
        <authorList>
            <person name="Mazel D."/>
            <person name="Le Roux F."/>
        </authorList>
    </citation>
    <scope>NUCLEOTIDE SEQUENCE [LARGE SCALE GENOMIC DNA]</scope>
    <source>
        <strain>LGP32</strain>
    </source>
</reference>
<accession>B7VGL9</accession>
<keyword id="KW-0028">Amino-acid biosynthesis</keyword>
<keyword id="KW-0100">Branched-chain amino acid biosynthesis</keyword>
<keyword id="KW-0460">Magnesium</keyword>
<keyword id="KW-0479">Metal-binding</keyword>
<keyword id="KW-0521">NADP</keyword>
<keyword id="KW-0560">Oxidoreductase</keyword>
<keyword id="KW-0677">Repeat</keyword>
<name>ILVC_VIBA3</name>
<evidence type="ECO:0000255" key="1">
    <source>
        <dbReference type="HAMAP-Rule" id="MF_00435"/>
    </source>
</evidence>
<evidence type="ECO:0000255" key="2">
    <source>
        <dbReference type="PROSITE-ProRule" id="PRU01197"/>
    </source>
</evidence>
<evidence type="ECO:0000255" key="3">
    <source>
        <dbReference type="PROSITE-ProRule" id="PRU01198"/>
    </source>
</evidence>